<comment type="similarity">
    <text evidence="1">Belongs to the UPF0178 family.</text>
</comment>
<accession>A8IL81</accession>
<gene>
    <name type="ordered locus">AZC_4000</name>
</gene>
<feature type="chain" id="PRO_1000072422" description="UPF0178 protein AZC_4000">
    <location>
        <begin position="1"/>
        <end position="159"/>
    </location>
</feature>
<evidence type="ECO:0000255" key="1">
    <source>
        <dbReference type="HAMAP-Rule" id="MF_00489"/>
    </source>
</evidence>
<dbReference type="EMBL" id="AP009384">
    <property type="protein sequence ID" value="BAF89998.1"/>
    <property type="molecule type" value="Genomic_DNA"/>
</dbReference>
<dbReference type="RefSeq" id="WP_012172520.1">
    <property type="nucleotide sequence ID" value="NC_009937.1"/>
</dbReference>
<dbReference type="STRING" id="438753.AZC_4000"/>
<dbReference type="KEGG" id="azc:AZC_4000"/>
<dbReference type="eggNOG" id="COG1671">
    <property type="taxonomic scope" value="Bacteria"/>
</dbReference>
<dbReference type="HOGENOM" id="CLU_106619_2_1_5"/>
<dbReference type="Proteomes" id="UP000000270">
    <property type="component" value="Chromosome"/>
</dbReference>
<dbReference type="CDD" id="cd18720">
    <property type="entry name" value="PIN_YqxD-like"/>
    <property type="match status" value="1"/>
</dbReference>
<dbReference type="HAMAP" id="MF_00489">
    <property type="entry name" value="UPF0178"/>
    <property type="match status" value="1"/>
</dbReference>
<dbReference type="InterPro" id="IPR003791">
    <property type="entry name" value="UPF0178"/>
</dbReference>
<dbReference type="NCBIfam" id="NF001095">
    <property type="entry name" value="PRK00124.1"/>
    <property type="match status" value="1"/>
</dbReference>
<dbReference type="PANTHER" id="PTHR35146">
    <property type="entry name" value="UPF0178 PROTEIN YAII"/>
    <property type="match status" value="1"/>
</dbReference>
<dbReference type="PANTHER" id="PTHR35146:SF1">
    <property type="entry name" value="UPF0178 PROTEIN YAII"/>
    <property type="match status" value="1"/>
</dbReference>
<dbReference type="Pfam" id="PF02639">
    <property type="entry name" value="DUF188"/>
    <property type="match status" value="1"/>
</dbReference>
<keyword id="KW-1185">Reference proteome</keyword>
<proteinExistence type="inferred from homology"/>
<protein>
    <recommendedName>
        <fullName evidence="1">UPF0178 protein AZC_4000</fullName>
    </recommendedName>
</protein>
<name>Y4000_AZOC5</name>
<reference key="1">
    <citation type="submission" date="2007-04" db="EMBL/GenBank/DDBJ databases">
        <title>Complete genome sequence of the nitrogen-fixing bacterium Azorhizobium caulinodans ORS571.</title>
        <authorList>
            <person name="Lee K.B."/>
            <person name="Backer P.D."/>
            <person name="Aono T."/>
            <person name="Liu C.T."/>
            <person name="Suzuki S."/>
            <person name="Suzuki T."/>
            <person name="Kaneko T."/>
            <person name="Yamada M."/>
            <person name="Tabata S."/>
            <person name="Kupfer D.M."/>
            <person name="Najar F.Z."/>
            <person name="Wiley G.B."/>
            <person name="Roe B."/>
            <person name="Binnewies T."/>
            <person name="Ussery D."/>
            <person name="Vereecke D."/>
            <person name="Gevers D."/>
            <person name="Holsters M."/>
            <person name="Oyaizu H."/>
        </authorList>
    </citation>
    <scope>NUCLEOTIDE SEQUENCE [LARGE SCALE GENOMIC DNA]</scope>
    <source>
        <strain>ATCC 43989 / DSM 5975 / JCM 20966 / LMG 6465 / NBRC 14845 / NCIMB 13405 / ORS 571</strain>
    </source>
</reference>
<sequence length="159" mass="16964">MSARPEPITLYVDADACPVKAEIYKVAERHALHVHVVSNQPIAIPRDDRIHRVVVASGPDVADDWIAERVSRGDVVVTADIPLAARCVKAGADVIAPNGKAHTEATIGATLATRNLMDDLRSAGQITGGPKPFSPRDRSAFLSALDLAIVRLKRAGFTT</sequence>
<organism>
    <name type="scientific">Azorhizobium caulinodans (strain ATCC 43989 / DSM 5975 / JCM 20966 / LMG 6465 / NBRC 14845 / NCIMB 13405 / ORS 571)</name>
    <dbReference type="NCBI Taxonomy" id="438753"/>
    <lineage>
        <taxon>Bacteria</taxon>
        <taxon>Pseudomonadati</taxon>
        <taxon>Pseudomonadota</taxon>
        <taxon>Alphaproteobacteria</taxon>
        <taxon>Hyphomicrobiales</taxon>
        <taxon>Xanthobacteraceae</taxon>
        <taxon>Azorhizobium</taxon>
    </lineage>
</organism>